<gene>
    <name type="ordered locus">67R</name>
</gene>
<proteinExistence type="inferred from homology"/>
<comment type="function">
    <text evidence="1">Plays a role for multiplication of the virus in different cell types.</text>
</comment>
<comment type="similarity">
    <text evidence="2">Belongs to the poxviridae C7 protein family.</text>
</comment>
<feature type="chain" id="PRO_0000099405" description="Probable host range protein 2">
    <location>
        <begin position="1"/>
        <end position="178"/>
    </location>
</feature>
<dbReference type="EMBL" id="AJ293568">
    <property type="protein sequence ID" value="CAC21305.1"/>
    <property type="molecule type" value="Genomic_DNA"/>
</dbReference>
<dbReference type="RefSeq" id="NP_073452.1">
    <property type="nucleotide sequence ID" value="NC_002642.1"/>
</dbReference>
<dbReference type="SMR" id="Q9DHP6"/>
<dbReference type="GeneID" id="918711"/>
<dbReference type="KEGG" id="vg:918711"/>
<dbReference type="OrthoDB" id="13913at10239"/>
<dbReference type="Proteomes" id="UP000136581">
    <property type="component" value="Genome"/>
</dbReference>
<dbReference type="GO" id="GO:0016032">
    <property type="term" value="P:viral process"/>
    <property type="evidence" value="ECO:0007669"/>
    <property type="project" value="InterPro"/>
</dbReference>
<dbReference type="InterPro" id="IPR004967">
    <property type="entry name" value="Poxvirus_C7/F8A"/>
</dbReference>
<dbReference type="Pfam" id="PF03287">
    <property type="entry name" value="Pox_C7_F8A"/>
    <property type="match status" value="1"/>
</dbReference>
<dbReference type="PIRSF" id="PIRSF003779">
    <property type="entry name" value="VAC_C7L"/>
    <property type="match status" value="1"/>
</dbReference>
<name>VHR2_YLDV</name>
<sequence length="178" mass="21043">MGITHELDIFVTNEDLALKNVELFKGNSYGCFINLKVKEEKKFNIIFVLKPDWSEVDKVKPIRMIVNNNSVDVEKVSESLYQVVYSASFSINSDSYVKVFSDNPDKYKHMYPTVTINVPKKKFKVVDQGNTYMFIQSPIDDCDKEQFLKNEFEYYDEENDFDDYEEYVKNRNDSFDDY</sequence>
<accession>Q9DHP6</accession>
<protein>
    <recommendedName>
        <fullName>Probable host range protein 2</fullName>
    </recommendedName>
</protein>
<evidence type="ECO:0000250" key="1"/>
<evidence type="ECO:0000305" key="2"/>
<reference key="1">
    <citation type="journal article" date="2001" name="Virology">
        <title>The genome sequence of Yaba-like disease virus, a yatapoxvirus.</title>
        <authorList>
            <person name="Lee H.-J."/>
            <person name="Essani K."/>
            <person name="Smith G.L."/>
        </authorList>
    </citation>
    <scope>NUCLEOTIDE SEQUENCE [LARGE SCALE GENOMIC DNA]</scope>
</reference>
<organism>
    <name type="scientific">Yaba-like disease virus</name>
    <name type="common">YLDV</name>
    <dbReference type="NCBI Taxonomy" id="132475"/>
    <lineage>
        <taxon>Viruses</taxon>
        <taxon>Varidnaviria</taxon>
        <taxon>Bamfordvirae</taxon>
        <taxon>Nucleocytoviricota</taxon>
        <taxon>Pokkesviricetes</taxon>
        <taxon>Chitovirales</taxon>
        <taxon>Poxviridae</taxon>
        <taxon>Chordopoxvirinae</taxon>
        <taxon>Yatapoxvirus</taxon>
        <taxon>Tanapox virus</taxon>
    </lineage>
</organism>
<organismHost>
    <name type="scientific">Homo sapiens</name>
    <name type="common">Human</name>
    <dbReference type="NCBI Taxonomy" id="9606"/>
</organismHost>
<organismHost>
    <name type="scientific">Simiiformes</name>
    <dbReference type="NCBI Taxonomy" id="314293"/>
</organismHost>